<dbReference type="EC" id="7.1.1.-" evidence="1"/>
<dbReference type="EMBL" id="AE016879">
    <property type="protein sequence ID" value="AAP29185.1"/>
    <property type="molecule type" value="Genomic_DNA"/>
</dbReference>
<dbReference type="EMBL" id="AE017334">
    <property type="protein sequence ID" value="AAT34685.1"/>
    <property type="molecule type" value="Genomic_DNA"/>
</dbReference>
<dbReference type="EMBL" id="AE017225">
    <property type="protein sequence ID" value="AAT57438.1"/>
    <property type="status" value="ALT_INIT"/>
    <property type="molecule type" value="Genomic_DNA"/>
</dbReference>
<dbReference type="RefSeq" id="NP_847699.1">
    <property type="nucleotide sequence ID" value="NC_003997.3"/>
</dbReference>
<dbReference type="RefSeq" id="WP_000236331.1">
    <property type="nucleotide sequence ID" value="NZ_WXXJ01000038.1"/>
</dbReference>
<dbReference type="SMR" id="Q81K01"/>
<dbReference type="STRING" id="261594.GBAA_5541"/>
<dbReference type="DNASU" id="1085217"/>
<dbReference type="GeneID" id="92803556"/>
<dbReference type="KEGG" id="ban:BA_5541"/>
<dbReference type="KEGG" id="bar:GBAA_5541"/>
<dbReference type="KEGG" id="bat:BAS5149"/>
<dbReference type="PATRIC" id="fig|198094.11.peg.5501"/>
<dbReference type="eggNOG" id="COG0377">
    <property type="taxonomic scope" value="Bacteria"/>
</dbReference>
<dbReference type="HOGENOM" id="CLU_055737_7_3_9"/>
<dbReference type="OMA" id="GCGGIEM"/>
<dbReference type="OrthoDB" id="9786737at2"/>
<dbReference type="Proteomes" id="UP000000427">
    <property type="component" value="Chromosome"/>
</dbReference>
<dbReference type="Proteomes" id="UP000000594">
    <property type="component" value="Chromosome"/>
</dbReference>
<dbReference type="GO" id="GO:0005886">
    <property type="term" value="C:plasma membrane"/>
    <property type="evidence" value="ECO:0007669"/>
    <property type="project" value="UniProtKB-SubCell"/>
</dbReference>
<dbReference type="GO" id="GO:0045271">
    <property type="term" value="C:respiratory chain complex I"/>
    <property type="evidence" value="ECO:0007669"/>
    <property type="project" value="TreeGrafter"/>
</dbReference>
<dbReference type="GO" id="GO:0051539">
    <property type="term" value="F:4 iron, 4 sulfur cluster binding"/>
    <property type="evidence" value="ECO:0007669"/>
    <property type="project" value="UniProtKB-KW"/>
</dbReference>
<dbReference type="GO" id="GO:0005506">
    <property type="term" value="F:iron ion binding"/>
    <property type="evidence" value="ECO:0007669"/>
    <property type="project" value="UniProtKB-UniRule"/>
</dbReference>
<dbReference type="GO" id="GO:0008137">
    <property type="term" value="F:NADH dehydrogenase (ubiquinone) activity"/>
    <property type="evidence" value="ECO:0007669"/>
    <property type="project" value="InterPro"/>
</dbReference>
<dbReference type="GO" id="GO:0050136">
    <property type="term" value="F:NADH:ubiquinone reductase (non-electrogenic) activity"/>
    <property type="evidence" value="ECO:0007669"/>
    <property type="project" value="UniProtKB-UniRule"/>
</dbReference>
<dbReference type="GO" id="GO:0048038">
    <property type="term" value="F:quinone binding"/>
    <property type="evidence" value="ECO:0007669"/>
    <property type="project" value="UniProtKB-KW"/>
</dbReference>
<dbReference type="GO" id="GO:0009060">
    <property type="term" value="P:aerobic respiration"/>
    <property type="evidence" value="ECO:0007669"/>
    <property type="project" value="TreeGrafter"/>
</dbReference>
<dbReference type="GO" id="GO:0015990">
    <property type="term" value="P:electron transport coupled proton transport"/>
    <property type="evidence" value="ECO:0007669"/>
    <property type="project" value="TreeGrafter"/>
</dbReference>
<dbReference type="FunFam" id="3.40.50.12280:FF:000002">
    <property type="entry name" value="NADH-quinone oxidoreductase subunit B"/>
    <property type="match status" value="1"/>
</dbReference>
<dbReference type="Gene3D" id="3.40.50.12280">
    <property type="match status" value="1"/>
</dbReference>
<dbReference type="HAMAP" id="MF_01356">
    <property type="entry name" value="NDH1_NuoB"/>
    <property type="match status" value="1"/>
</dbReference>
<dbReference type="InterPro" id="IPR006137">
    <property type="entry name" value="NADH_UbQ_OxRdtase-like_20kDa"/>
</dbReference>
<dbReference type="InterPro" id="IPR006138">
    <property type="entry name" value="NADH_UQ_OxRdtase_20Kd_su"/>
</dbReference>
<dbReference type="NCBIfam" id="TIGR01957">
    <property type="entry name" value="nuoB_fam"/>
    <property type="match status" value="1"/>
</dbReference>
<dbReference type="NCBIfam" id="NF005012">
    <property type="entry name" value="PRK06411.1"/>
    <property type="match status" value="1"/>
</dbReference>
<dbReference type="PANTHER" id="PTHR11995">
    <property type="entry name" value="NADH DEHYDROGENASE"/>
    <property type="match status" value="1"/>
</dbReference>
<dbReference type="PANTHER" id="PTHR11995:SF14">
    <property type="entry name" value="NADH DEHYDROGENASE [UBIQUINONE] IRON-SULFUR PROTEIN 7, MITOCHONDRIAL"/>
    <property type="match status" value="1"/>
</dbReference>
<dbReference type="Pfam" id="PF01058">
    <property type="entry name" value="Oxidored_q6"/>
    <property type="match status" value="1"/>
</dbReference>
<dbReference type="SUPFAM" id="SSF56770">
    <property type="entry name" value="HydA/Nqo6-like"/>
    <property type="match status" value="1"/>
</dbReference>
<proteinExistence type="inferred from homology"/>
<feature type="chain" id="PRO_0000376127" description="NADH-quinone oxidoreductase subunit B">
    <location>
        <begin position="1"/>
        <end position="172"/>
    </location>
</feature>
<feature type="binding site" evidence="1">
    <location>
        <position position="46"/>
    </location>
    <ligand>
        <name>[4Fe-4S] cluster</name>
        <dbReference type="ChEBI" id="CHEBI:49883"/>
    </ligand>
</feature>
<feature type="binding site" evidence="1">
    <location>
        <position position="47"/>
    </location>
    <ligand>
        <name>[4Fe-4S] cluster</name>
        <dbReference type="ChEBI" id="CHEBI:49883"/>
    </ligand>
</feature>
<feature type="binding site" evidence="1">
    <location>
        <position position="111"/>
    </location>
    <ligand>
        <name>[4Fe-4S] cluster</name>
        <dbReference type="ChEBI" id="CHEBI:49883"/>
    </ligand>
</feature>
<feature type="binding site" evidence="1">
    <location>
        <position position="141"/>
    </location>
    <ligand>
        <name>[4Fe-4S] cluster</name>
        <dbReference type="ChEBI" id="CHEBI:49883"/>
    </ligand>
</feature>
<sequence>MVINFEELHPNERAELERNIFFSTLEQLKGWARSNSLWPMTFGLACCAIEMMGVGSSHYDLDRFGSFFRTSPRQSDVMIVSGTVTKKMAPIVRRLYDQMPEPKWVIAMGSCATAGGPYVNSYAVVKGVDQIVPVDVYIPGCPPNPAALIYGINKLKEKIRYEAKTGKQVTNK</sequence>
<name>NUOB_BACAN</name>
<organism>
    <name type="scientific">Bacillus anthracis</name>
    <dbReference type="NCBI Taxonomy" id="1392"/>
    <lineage>
        <taxon>Bacteria</taxon>
        <taxon>Bacillati</taxon>
        <taxon>Bacillota</taxon>
        <taxon>Bacilli</taxon>
        <taxon>Bacillales</taxon>
        <taxon>Bacillaceae</taxon>
        <taxon>Bacillus</taxon>
        <taxon>Bacillus cereus group</taxon>
    </lineage>
</organism>
<keyword id="KW-0004">4Fe-4S</keyword>
<keyword id="KW-1003">Cell membrane</keyword>
<keyword id="KW-0408">Iron</keyword>
<keyword id="KW-0411">Iron-sulfur</keyword>
<keyword id="KW-0472">Membrane</keyword>
<keyword id="KW-0479">Metal-binding</keyword>
<keyword id="KW-0520">NAD</keyword>
<keyword id="KW-0874">Quinone</keyword>
<keyword id="KW-1185">Reference proteome</keyword>
<keyword id="KW-1278">Translocase</keyword>
<keyword id="KW-0813">Transport</keyword>
<evidence type="ECO:0000255" key="1">
    <source>
        <dbReference type="HAMAP-Rule" id="MF_01356"/>
    </source>
</evidence>
<evidence type="ECO:0000305" key="2"/>
<gene>
    <name evidence="1" type="primary">nuoB</name>
    <name type="ordered locus">BA_5541</name>
    <name type="ordered locus">GBAA_5541</name>
    <name type="ordered locus">BAS5149</name>
</gene>
<protein>
    <recommendedName>
        <fullName evidence="1">NADH-quinone oxidoreductase subunit B</fullName>
        <ecNumber evidence="1">7.1.1.-</ecNumber>
    </recommendedName>
    <alternativeName>
        <fullName evidence="1">NADH dehydrogenase I subunit B</fullName>
    </alternativeName>
    <alternativeName>
        <fullName evidence="1">NDH-1 subunit B</fullName>
    </alternativeName>
</protein>
<comment type="function">
    <text evidence="1">NDH-1 shuttles electrons from NADH, via FMN and iron-sulfur (Fe-S) centers, to quinones in the respiratory chain. The immediate electron acceptor for the enzyme in this species is believed to be a menaquinone. Couples the redox reaction to proton translocation (for every two electrons transferred, four hydrogen ions are translocated across the cytoplasmic membrane), and thus conserves the redox energy in a proton gradient.</text>
</comment>
<comment type="catalytic activity">
    <reaction evidence="1">
        <text>a quinone + NADH + 5 H(+)(in) = a quinol + NAD(+) + 4 H(+)(out)</text>
        <dbReference type="Rhea" id="RHEA:57888"/>
        <dbReference type="ChEBI" id="CHEBI:15378"/>
        <dbReference type="ChEBI" id="CHEBI:24646"/>
        <dbReference type="ChEBI" id="CHEBI:57540"/>
        <dbReference type="ChEBI" id="CHEBI:57945"/>
        <dbReference type="ChEBI" id="CHEBI:132124"/>
    </reaction>
</comment>
<comment type="cofactor">
    <cofactor evidence="1">
        <name>[4Fe-4S] cluster</name>
        <dbReference type="ChEBI" id="CHEBI:49883"/>
    </cofactor>
    <text evidence="1">Binds 1 [4Fe-4S] cluster.</text>
</comment>
<comment type="subunit">
    <text evidence="1">NDH-1 is composed of 14 different subunits. Subunits NuoB, C, D, E, F, and G constitute the peripheral sector of the complex.</text>
</comment>
<comment type="subcellular location">
    <subcellularLocation>
        <location evidence="1">Cell membrane</location>
        <topology evidence="1">Peripheral membrane protein</topology>
        <orientation evidence="1">Cytoplasmic side</orientation>
    </subcellularLocation>
</comment>
<comment type="similarity">
    <text evidence="1">Belongs to the complex I 20 kDa subunit family.</text>
</comment>
<comment type="sequence caution" evidence="2">
    <conflict type="erroneous initiation">
        <sequence resource="EMBL-CDS" id="AAT57438"/>
    </conflict>
</comment>
<reference key="1">
    <citation type="journal article" date="2009" name="J. Bacteriol.">
        <title>The complete genome sequence of Bacillus anthracis Ames 'Ancestor'.</title>
        <authorList>
            <person name="Ravel J."/>
            <person name="Jiang L."/>
            <person name="Stanley S.T."/>
            <person name="Wilson M.R."/>
            <person name="Decker R.S."/>
            <person name="Read T.D."/>
            <person name="Worsham P."/>
            <person name="Keim P.S."/>
            <person name="Salzberg S.L."/>
            <person name="Fraser-Liggett C.M."/>
            <person name="Rasko D.A."/>
        </authorList>
    </citation>
    <scope>NUCLEOTIDE SEQUENCE [LARGE SCALE GENOMIC DNA]</scope>
    <source>
        <strain>Ames ancestor</strain>
    </source>
</reference>
<reference key="2">
    <citation type="journal article" date="2003" name="Nature">
        <title>The genome sequence of Bacillus anthracis Ames and comparison to closely related bacteria.</title>
        <authorList>
            <person name="Read T.D."/>
            <person name="Peterson S.N."/>
            <person name="Tourasse N.J."/>
            <person name="Baillie L.W."/>
            <person name="Paulsen I.T."/>
            <person name="Nelson K.E."/>
            <person name="Tettelin H."/>
            <person name="Fouts D.E."/>
            <person name="Eisen J.A."/>
            <person name="Gill S.R."/>
            <person name="Holtzapple E.K."/>
            <person name="Okstad O.A."/>
            <person name="Helgason E."/>
            <person name="Rilstone J."/>
            <person name="Wu M."/>
            <person name="Kolonay J.F."/>
            <person name="Beanan M.J."/>
            <person name="Dodson R.J."/>
            <person name="Brinkac L.M."/>
            <person name="Gwinn M.L."/>
            <person name="DeBoy R.T."/>
            <person name="Madpu R."/>
            <person name="Daugherty S.C."/>
            <person name="Durkin A.S."/>
            <person name="Haft D.H."/>
            <person name="Nelson W.C."/>
            <person name="Peterson J.D."/>
            <person name="Pop M."/>
            <person name="Khouri H.M."/>
            <person name="Radune D."/>
            <person name="Benton J.L."/>
            <person name="Mahamoud Y."/>
            <person name="Jiang L."/>
            <person name="Hance I.R."/>
            <person name="Weidman J.F."/>
            <person name="Berry K.J."/>
            <person name="Plaut R.D."/>
            <person name="Wolf A.M."/>
            <person name="Watkins K.L."/>
            <person name="Nierman W.C."/>
            <person name="Hazen A."/>
            <person name="Cline R.T."/>
            <person name="Redmond C."/>
            <person name="Thwaite J.E."/>
            <person name="White O."/>
            <person name="Salzberg S.L."/>
            <person name="Thomason B."/>
            <person name="Friedlander A.M."/>
            <person name="Koehler T.M."/>
            <person name="Hanna P.C."/>
            <person name="Kolstoe A.-B."/>
            <person name="Fraser C.M."/>
        </authorList>
    </citation>
    <scope>NUCLEOTIDE SEQUENCE [LARGE SCALE GENOMIC DNA]</scope>
    <source>
        <strain>Ames / isolate Porton</strain>
    </source>
</reference>
<reference key="3">
    <citation type="submission" date="2004-01" db="EMBL/GenBank/DDBJ databases">
        <title>Complete genome sequence of Bacillus anthracis Sterne.</title>
        <authorList>
            <person name="Brettin T.S."/>
            <person name="Bruce D."/>
            <person name="Challacombe J.F."/>
            <person name="Gilna P."/>
            <person name="Han C."/>
            <person name="Hill K."/>
            <person name="Hitchcock P."/>
            <person name="Jackson P."/>
            <person name="Keim P."/>
            <person name="Longmire J."/>
            <person name="Lucas S."/>
            <person name="Okinaka R."/>
            <person name="Richardson P."/>
            <person name="Rubin E."/>
            <person name="Tice H."/>
        </authorList>
    </citation>
    <scope>NUCLEOTIDE SEQUENCE [LARGE SCALE GENOMIC DNA]</scope>
    <source>
        <strain>Sterne</strain>
    </source>
</reference>
<accession>Q81K01</accession>
<accession>Q6HQK0</accession>
<accession>Q6KJX5</accession>